<sequence length="318" mass="35697">MFTLNLLLYIIPILLAVAFLTLIERKVLGYMQFRKGPNIVGPYGLLQPFADAVKLFTKEPLRPLTSSILMFILAPILALSIALTIWTPLPMPNTLLDLNLGLLFILSLSGLSVYSILWSGWASNSKYALIGALRAVAQTISYEVSLAIILLSVMLINGSFTLKTLSTTQENWWLITTTWPLAMMWYISTLAETNRAPFDLTEGESELVSGFNVEYAAGPFAMFFLAEYANIIAMNAITTILFLGSSLTTNLNHIDTISFMLKTLLLTMAFLWVRASYPRFRYDQLMHLLWKNFLPLTLALCLWYISLPIALSCIPPQM</sequence>
<evidence type="ECO:0000250" key="1"/>
<evidence type="ECO:0000255" key="2"/>
<evidence type="ECO:0000305" key="3"/>
<keyword id="KW-0249">Electron transport</keyword>
<keyword id="KW-0472">Membrane</keyword>
<keyword id="KW-0496">Mitochondrion</keyword>
<keyword id="KW-0999">Mitochondrion inner membrane</keyword>
<keyword id="KW-0520">NAD</keyword>
<keyword id="KW-0679">Respiratory chain</keyword>
<keyword id="KW-1278">Translocase</keyword>
<keyword id="KW-0812">Transmembrane</keyword>
<keyword id="KW-1133">Transmembrane helix</keyword>
<keyword id="KW-0813">Transport</keyword>
<keyword id="KW-0830">Ubiquinone</keyword>
<name>NU1M_SMIMA</name>
<protein>
    <recommendedName>
        <fullName>NADH-ubiquinone oxidoreductase chain 1</fullName>
        <ecNumber>7.1.1.2</ecNumber>
    </recommendedName>
    <alternativeName>
        <fullName>NADH dehydrogenase subunit 1</fullName>
    </alternativeName>
</protein>
<feature type="chain" id="PRO_0000117478" description="NADH-ubiquinone oxidoreductase chain 1">
    <location>
        <begin position="1"/>
        <end position="318"/>
    </location>
</feature>
<feature type="transmembrane region" description="Helical" evidence="2">
    <location>
        <begin position="3"/>
        <end position="23"/>
    </location>
</feature>
<feature type="transmembrane region" description="Helical" evidence="2">
    <location>
        <begin position="68"/>
        <end position="88"/>
    </location>
</feature>
<feature type="transmembrane region" description="Helical" evidence="2">
    <location>
        <begin position="100"/>
        <end position="120"/>
    </location>
</feature>
<feature type="transmembrane region" description="Helical" evidence="2">
    <location>
        <begin position="136"/>
        <end position="156"/>
    </location>
</feature>
<feature type="transmembrane region" description="Helical" evidence="2">
    <location>
        <begin position="172"/>
        <end position="192"/>
    </location>
</feature>
<feature type="transmembrane region" description="Helical" evidence="2">
    <location>
        <begin position="223"/>
        <end position="243"/>
    </location>
</feature>
<feature type="transmembrane region" description="Helical" evidence="2">
    <location>
        <begin position="253"/>
        <end position="273"/>
    </location>
</feature>
<feature type="transmembrane region" description="Helical" evidence="2">
    <location>
        <begin position="294"/>
        <end position="314"/>
    </location>
</feature>
<proteinExistence type="inferred from homology"/>
<accession>O78712</accession>
<organism>
    <name type="scientific">Sminthopsis macroura</name>
    <name type="common">Stripe-faced dunnart</name>
    <dbReference type="NCBI Taxonomy" id="9302"/>
    <lineage>
        <taxon>Eukaryota</taxon>
        <taxon>Metazoa</taxon>
        <taxon>Chordata</taxon>
        <taxon>Craniata</taxon>
        <taxon>Vertebrata</taxon>
        <taxon>Euteleostomi</taxon>
        <taxon>Mammalia</taxon>
        <taxon>Metatheria</taxon>
        <taxon>Dasyuromorphia</taxon>
        <taxon>Dasyuridae</taxon>
        <taxon>Sminthopsis</taxon>
    </lineage>
</organism>
<comment type="function">
    <text evidence="1">Core subunit of the mitochondrial membrane respiratory chain NADH dehydrogenase (Complex I) that is believed to belong to the minimal assembly required for catalysis. Complex I functions in the transfer of electrons from NADH to the respiratory chain. The immediate electron acceptor for the enzyme is believed to be ubiquinone (By similarity).</text>
</comment>
<comment type="catalytic activity">
    <reaction>
        <text>a ubiquinone + NADH + 5 H(+)(in) = a ubiquinol + NAD(+) + 4 H(+)(out)</text>
        <dbReference type="Rhea" id="RHEA:29091"/>
        <dbReference type="Rhea" id="RHEA-COMP:9565"/>
        <dbReference type="Rhea" id="RHEA-COMP:9566"/>
        <dbReference type="ChEBI" id="CHEBI:15378"/>
        <dbReference type="ChEBI" id="CHEBI:16389"/>
        <dbReference type="ChEBI" id="CHEBI:17976"/>
        <dbReference type="ChEBI" id="CHEBI:57540"/>
        <dbReference type="ChEBI" id="CHEBI:57945"/>
        <dbReference type="EC" id="7.1.1.2"/>
    </reaction>
</comment>
<comment type="subcellular location">
    <subcellularLocation>
        <location evidence="1">Mitochondrion inner membrane</location>
        <topology evidence="1">Multi-pass membrane protein</topology>
    </subcellularLocation>
</comment>
<comment type="similarity">
    <text evidence="3">Belongs to the complex I subunit 1 family.</text>
</comment>
<geneLocation type="mitochondrion"/>
<gene>
    <name type="primary">MT-ND1</name>
    <name type="synonym">MTND1</name>
    <name type="synonym">NADH1</name>
    <name type="synonym">ND1</name>
</gene>
<reference key="1">
    <citation type="journal article" date="1998" name="J. Mol. Evol.">
        <title>Conflict among individual mitochondrial proteins in resolving the phylogeny of eutherian orders.</title>
        <authorList>
            <person name="Cao Y."/>
            <person name="Janke A."/>
            <person name="Waddell P.J."/>
            <person name="Westerman M."/>
            <person name="Takenaka O."/>
            <person name="Murata S."/>
            <person name="Okada N."/>
            <person name="Paeaebo S."/>
            <person name="Hasegawa M."/>
        </authorList>
    </citation>
    <scope>NUCLEOTIDE SEQUENCE [GENOMIC DNA]</scope>
    <source>
        <tissue>Liver</tissue>
    </source>
</reference>
<dbReference type="EC" id="7.1.1.2"/>
<dbReference type="EMBL" id="AB011229">
    <property type="protein sequence ID" value="BAA32121.1"/>
    <property type="molecule type" value="Genomic_DNA"/>
</dbReference>
<dbReference type="SMR" id="O78712"/>
<dbReference type="GO" id="GO:0005743">
    <property type="term" value="C:mitochondrial inner membrane"/>
    <property type="evidence" value="ECO:0007669"/>
    <property type="project" value="UniProtKB-SubCell"/>
</dbReference>
<dbReference type="GO" id="GO:0008137">
    <property type="term" value="F:NADH dehydrogenase (ubiquinone) activity"/>
    <property type="evidence" value="ECO:0007669"/>
    <property type="project" value="UniProtKB-EC"/>
</dbReference>
<dbReference type="GO" id="GO:0009060">
    <property type="term" value="P:aerobic respiration"/>
    <property type="evidence" value="ECO:0007669"/>
    <property type="project" value="TreeGrafter"/>
</dbReference>
<dbReference type="HAMAP" id="MF_01350">
    <property type="entry name" value="NDH1_NuoH"/>
    <property type="match status" value="1"/>
</dbReference>
<dbReference type="InterPro" id="IPR001694">
    <property type="entry name" value="NADH_UbQ_OxRdtase_su1/FPO"/>
</dbReference>
<dbReference type="InterPro" id="IPR018086">
    <property type="entry name" value="NADH_UbQ_OxRdtase_su1_CS"/>
</dbReference>
<dbReference type="PANTHER" id="PTHR11432">
    <property type="entry name" value="NADH DEHYDROGENASE SUBUNIT 1"/>
    <property type="match status" value="1"/>
</dbReference>
<dbReference type="PANTHER" id="PTHR11432:SF3">
    <property type="entry name" value="NADH-UBIQUINONE OXIDOREDUCTASE CHAIN 1"/>
    <property type="match status" value="1"/>
</dbReference>
<dbReference type="Pfam" id="PF00146">
    <property type="entry name" value="NADHdh"/>
    <property type="match status" value="1"/>
</dbReference>
<dbReference type="PROSITE" id="PS00667">
    <property type="entry name" value="COMPLEX1_ND1_1"/>
    <property type="match status" value="1"/>
</dbReference>
<dbReference type="PROSITE" id="PS00668">
    <property type="entry name" value="COMPLEX1_ND1_2"/>
    <property type="match status" value="1"/>
</dbReference>